<keyword id="KW-0238">DNA-binding</keyword>
<keyword id="KW-0658">Purine biosynthesis</keyword>
<keyword id="KW-0678">Repressor</keyword>
<keyword id="KW-0804">Transcription</keyword>
<keyword id="KW-0805">Transcription regulation</keyword>
<sequence>MATIKDVAKRANVSTTTVSHVINKTRFVAEETRNAVWAAIKELHYSPSAVARSLKVNHTKSIGLLATSSEAAYFAEIIEAVEKNCFQKGYTLILGNAWNNLEKQRAYLSMMAQKRVDGLLVMCSEYPEPLLAMLEEYRHIPMVVMDWGEAKADFTDAVIDNAFEGGYMAGRYLIERGHREIGVIPGPLERNTGAGRLAGFMKAMEEAMIKVPESWIVQGDFEPESGYRAMQQILSQSHRPTAVFCGGDIMAMGALCAADEMGLRVPQDVSLIGYDNVRNARYFTPALTTIHQPKDSLGETAFNMLLDRIVNKREEPQSIEVHPRLIERRSVADGPFRDYRR</sequence>
<dbReference type="EMBL" id="CP000243">
    <property type="protein sequence ID" value="ABE07327.1"/>
    <property type="molecule type" value="Genomic_DNA"/>
</dbReference>
<dbReference type="RefSeq" id="WP_000190985.1">
    <property type="nucleotide sequence ID" value="NZ_CP064825.1"/>
</dbReference>
<dbReference type="SMR" id="Q1RBD7"/>
<dbReference type="KEGG" id="eci:UTI89_C1849"/>
<dbReference type="HOGENOM" id="CLU_037628_6_2_6"/>
<dbReference type="UniPathway" id="UPA00488"/>
<dbReference type="Proteomes" id="UP000001952">
    <property type="component" value="Chromosome"/>
</dbReference>
<dbReference type="GO" id="GO:0003700">
    <property type="term" value="F:DNA-binding transcription factor activity"/>
    <property type="evidence" value="ECO:0007669"/>
    <property type="project" value="TreeGrafter"/>
</dbReference>
<dbReference type="GO" id="GO:0000976">
    <property type="term" value="F:transcription cis-regulatory region binding"/>
    <property type="evidence" value="ECO:0007669"/>
    <property type="project" value="TreeGrafter"/>
</dbReference>
<dbReference type="GO" id="GO:0045892">
    <property type="term" value="P:negative regulation of DNA-templated transcription"/>
    <property type="evidence" value="ECO:0007669"/>
    <property type="project" value="UniProtKB-UniRule"/>
</dbReference>
<dbReference type="GO" id="GO:0006164">
    <property type="term" value="P:purine nucleotide biosynthetic process"/>
    <property type="evidence" value="ECO:0007669"/>
    <property type="project" value="UniProtKB-UniPathway"/>
</dbReference>
<dbReference type="CDD" id="cd01392">
    <property type="entry name" value="HTH_LacI"/>
    <property type="match status" value="1"/>
</dbReference>
<dbReference type="CDD" id="cd06275">
    <property type="entry name" value="PBP1_PurR"/>
    <property type="match status" value="1"/>
</dbReference>
<dbReference type="FunFam" id="1.10.260.40:FF:000002">
    <property type="entry name" value="HTH-type transcriptional repressor PurR"/>
    <property type="match status" value="1"/>
</dbReference>
<dbReference type="FunFam" id="3.40.50.2300:FF:000045">
    <property type="entry name" value="HTH-type transcriptional repressor PurR"/>
    <property type="match status" value="1"/>
</dbReference>
<dbReference type="Gene3D" id="3.40.50.2300">
    <property type="match status" value="2"/>
</dbReference>
<dbReference type="Gene3D" id="1.10.260.40">
    <property type="entry name" value="lambda repressor-like DNA-binding domains"/>
    <property type="match status" value="1"/>
</dbReference>
<dbReference type="HAMAP" id="MF_01277">
    <property type="entry name" value="HTH_type_PurR"/>
    <property type="match status" value="1"/>
</dbReference>
<dbReference type="InterPro" id="IPR000843">
    <property type="entry name" value="HTH_LacI"/>
</dbReference>
<dbReference type="InterPro" id="IPR046335">
    <property type="entry name" value="LacI/GalR-like_sensor"/>
</dbReference>
<dbReference type="InterPro" id="IPR010982">
    <property type="entry name" value="Lambda_DNA-bd_dom_sf"/>
</dbReference>
<dbReference type="InterPro" id="IPR028082">
    <property type="entry name" value="Peripla_BP_I"/>
</dbReference>
<dbReference type="InterPro" id="IPR023588">
    <property type="entry name" value="Tscrpt_reg_HTH_PurR"/>
</dbReference>
<dbReference type="NCBIfam" id="NF007979">
    <property type="entry name" value="PRK10703.1"/>
    <property type="match status" value="1"/>
</dbReference>
<dbReference type="PANTHER" id="PTHR30146:SF148">
    <property type="entry name" value="HTH-TYPE TRANSCRIPTIONAL REPRESSOR PURR-RELATED"/>
    <property type="match status" value="1"/>
</dbReference>
<dbReference type="PANTHER" id="PTHR30146">
    <property type="entry name" value="LACI-RELATED TRANSCRIPTIONAL REPRESSOR"/>
    <property type="match status" value="1"/>
</dbReference>
<dbReference type="Pfam" id="PF00356">
    <property type="entry name" value="LacI"/>
    <property type="match status" value="1"/>
</dbReference>
<dbReference type="Pfam" id="PF13377">
    <property type="entry name" value="Peripla_BP_3"/>
    <property type="match status" value="1"/>
</dbReference>
<dbReference type="PRINTS" id="PR00036">
    <property type="entry name" value="HTHLACI"/>
</dbReference>
<dbReference type="SMART" id="SM00354">
    <property type="entry name" value="HTH_LACI"/>
    <property type="match status" value="1"/>
</dbReference>
<dbReference type="SUPFAM" id="SSF47413">
    <property type="entry name" value="lambda repressor-like DNA-binding domains"/>
    <property type="match status" value="1"/>
</dbReference>
<dbReference type="SUPFAM" id="SSF53822">
    <property type="entry name" value="Periplasmic binding protein-like I"/>
    <property type="match status" value="1"/>
</dbReference>
<dbReference type="PROSITE" id="PS00356">
    <property type="entry name" value="HTH_LACI_1"/>
    <property type="match status" value="1"/>
</dbReference>
<dbReference type="PROSITE" id="PS50932">
    <property type="entry name" value="HTH_LACI_2"/>
    <property type="match status" value="1"/>
</dbReference>
<comment type="function">
    <text evidence="1">Is the main repressor of the genes involved in the de novo synthesis of purine nucleotides, regulating purB, purC, purEK, purF, purHD, purL, purMN and guaBA expression. PurR is allosterically activated to bind its cognate DNA by binding the purine corepressors, hypoxanthine or guanine, thereby effecting transcription repression.</text>
</comment>
<comment type="pathway">
    <text>Purine metabolism; purine nucleotide biosynthesis [regulation].</text>
</comment>
<comment type="subunit">
    <text evidence="1">Homodimer.</text>
</comment>
<comment type="domain">
    <text evidence="1">Consists of two structural and functional domains: an N-terminal DNA-binding domain, approximately the first 60 residues, and a larger C-terminal domain, approximately 280 residues, which imparts the function of corepressor binding and oligomerization.</text>
</comment>
<proteinExistence type="inferred from homology"/>
<reference key="1">
    <citation type="journal article" date="2006" name="Proc. Natl. Acad. Sci. U.S.A.">
        <title>Identification of genes subject to positive selection in uropathogenic strains of Escherichia coli: a comparative genomics approach.</title>
        <authorList>
            <person name="Chen S.L."/>
            <person name="Hung C.-S."/>
            <person name="Xu J."/>
            <person name="Reigstad C.S."/>
            <person name="Magrini V."/>
            <person name="Sabo A."/>
            <person name="Blasiar D."/>
            <person name="Bieri T."/>
            <person name="Meyer R.R."/>
            <person name="Ozersky P."/>
            <person name="Armstrong J.R."/>
            <person name="Fulton R.S."/>
            <person name="Latreille J.P."/>
            <person name="Spieth J."/>
            <person name="Hooton T.M."/>
            <person name="Mardis E.R."/>
            <person name="Hultgren S.J."/>
            <person name="Gordon J.I."/>
        </authorList>
    </citation>
    <scope>NUCLEOTIDE SEQUENCE [LARGE SCALE GENOMIC DNA]</scope>
    <source>
        <strain>UTI89 / UPEC</strain>
    </source>
</reference>
<name>PURR_ECOUT</name>
<feature type="chain" id="PRO_0000279655" description="HTH-type transcriptional repressor PurR">
    <location>
        <begin position="1"/>
        <end position="341"/>
    </location>
</feature>
<feature type="domain" description="HTH lacI-type" evidence="1">
    <location>
        <begin position="2"/>
        <end position="56"/>
    </location>
</feature>
<feature type="DNA-binding region" description="H-T-H motif" evidence="1">
    <location>
        <begin position="4"/>
        <end position="23"/>
    </location>
</feature>
<feature type="DNA-binding region" evidence="1">
    <location>
        <begin position="48"/>
        <end position="56"/>
    </location>
</feature>
<feature type="binding site" evidence="1">
    <location>
        <position position="73"/>
    </location>
    <ligand>
        <name>hypoxanthine</name>
        <dbReference type="ChEBI" id="CHEBI:17368"/>
    </ligand>
</feature>
<feature type="binding site" evidence="1">
    <location>
        <position position="190"/>
    </location>
    <ligand>
        <name>hypoxanthine</name>
        <dbReference type="ChEBI" id="CHEBI:17368"/>
    </ligand>
</feature>
<feature type="binding site" evidence="1">
    <location>
        <position position="192"/>
    </location>
    <ligand>
        <name>hypoxanthine</name>
        <dbReference type="ChEBI" id="CHEBI:17368"/>
    </ligand>
</feature>
<feature type="binding site" evidence="1">
    <location>
        <position position="221"/>
    </location>
    <ligand>
        <name>hypoxanthine</name>
        <dbReference type="ChEBI" id="CHEBI:17368"/>
    </ligand>
</feature>
<feature type="binding site" evidence="1">
    <location>
        <position position="275"/>
    </location>
    <ligand>
        <name>hypoxanthine</name>
        <dbReference type="ChEBI" id="CHEBI:17368"/>
    </ligand>
</feature>
<organism>
    <name type="scientific">Escherichia coli (strain UTI89 / UPEC)</name>
    <dbReference type="NCBI Taxonomy" id="364106"/>
    <lineage>
        <taxon>Bacteria</taxon>
        <taxon>Pseudomonadati</taxon>
        <taxon>Pseudomonadota</taxon>
        <taxon>Gammaproteobacteria</taxon>
        <taxon>Enterobacterales</taxon>
        <taxon>Enterobacteriaceae</taxon>
        <taxon>Escherichia</taxon>
    </lineage>
</organism>
<accession>Q1RBD7</accession>
<protein>
    <recommendedName>
        <fullName evidence="1">HTH-type transcriptional repressor PurR</fullName>
    </recommendedName>
    <alternativeName>
        <fullName evidence="1">Pur regulon repressor</fullName>
    </alternativeName>
    <alternativeName>
        <fullName evidence="1">Purine nucleotide synthesis repressor</fullName>
    </alternativeName>
</protein>
<gene>
    <name evidence="1" type="primary">purR</name>
    <name type="ordered locus">UTI89_C1849</name>
</gene>
<evidence type="ECO:0000255" key="1">
    <source>
        <dbReference type="HAMAP-Rule" id="MF_01277"/>
    </source>
</evidence>